<proteinExistence type="evidence at protein level"/>
<sequence>MLSLRVPTPTSFDFRRYQAGDLERRWRLSRDSFLSFSPKFEENRGFRFGVKSSKSDVSFTAAEEEETLPEELHAELMPKHVAIIMDGNGRWAKNRGLQPWDGHRAGVEALKEIVELCGKWGIQVLTVFAFSTDNWIRPRIEIDFLFSLFERSLKTEFQNLAKNNVRISIIGDSSKLPKSLLRVINEVEEVTKNNTRLQLIVAVGYSGKYDVLQACRGIARRVKDGEIEVEEIDERLIEEELETNCTEFPYPDLLIRTSGELRVSNFLLWQLAYTELFFAQELWPDFGRSGFIEALMSFQQRQRRFGGRKS</sequence>
<accession>Q56Y11</accession>
<accession>Q9LUY4</accession>
<reference key="1">
    <citation type="journal article" date="2000" name="DNA Res.">
        <title>Structural analysis of Arabidopsis thaliana chromosome 5. X. Sequence features of the regions of 3,076,755 bp covered by sixty P1 and TAC clones.</title>
        <authorList>
            <person name="Sato S."/>
            <person name="Nakamura Y."/>
            <person name="Kaneko T."/>
            <person name="Katoh T."/>
            <person name="Asamizu E."/>
            <person name="Kotani H."/>
            <person name="Tabata S."/>
        </authorList>
    </citation>
    <scope>NUCLEOTIDE SEQUENCE [LARGE SCALE GENOMIC DNA]</scope>
    <source>
        <strain>cv. Columbia</strain>
    </source>
</reference>
<reference key="2">
    <citation type="journal article" date="2017" name="Plant J.">
        <title>Araport11: a complete reannotation of the Arabidopsis thaliana reference genome.</title>
        <authorList>
            <person name="Cheng C.Y."/>
            <person name="Krishnakumar V."/>
            <person name="Chan A.P."/>
            <person name="Thibaud-Nissen F."/>
            <person name="Schobel S."/>
            <person name="Town C.D."/>
        </authorList>
    </citation>
    <scope>GENOME REANNOTATION</scope>
    <source>
        <strain>cv. Columbia</strain>
    </source>
</reference>
<reference key="3">
    <citation type="submission" date="2005-03" db="EMBL/GenBank/DDBJ databases">
        <title>Large-scale analysis of RIKEN Arabidopsis full-length (RAFL) cDNAs.</title>
        <authorList>
            <person name="Totoki Y."/>
            <person name="Seki M."/>
            <person name="Ishida J."/>
            <person name="Nakajima M."/>
            <person name="Enju A."/>
            <person name="Kamiya A."/>
            <person name="Narusaka M."/>
            <person name="Shin-i T."/>
            <person name="Nakagawa M."/>
            <person name="Sakamoto N."/>
            <person name="Oishi K."/>
            <person name="Kohara Y."/>
            <person name="Kobayashi M."/>
            <person name="Toyoda A."/>
            <person name="Sakaki Y."/>
            <person name="Sakurai T."/>
            <person name="Iida K."/>
            <person name="Akiyama K."/>
            <person name="Satou M."/>
            <person name="Toyoda T."/>
            <person name="Konagaya A."/>
            <person name="Carninci P."/>
            <person name="Kawai J."/>
            <person name="Hayashizaki Y."/>
            <person name="Shinozaki K."/>
        </authorList>
    </citation>
    <scope>NUCLEOTIDE SEQUENCE [LARGE SCALE MRNA] (ISOFORM 2)</scope>
    <source>
        <strain>cv. Columbia</strain>
    </source>
</reference>
<gene>
    <name type="ordered locus">At5g58770</name>
    <name type="ORF">MZN1.21</name>
</gene>
<keyword id="KW-0002">3D-structure</keyword>
<keyword id="KW-0025">Alternative splicing</keyword>
<keyword id="KW-1185">Reference proteome</keyword>
<keyword id="KW-0808">Transferase</keyword>
<comment type="function">
    <text evidence="1">Catalyzes cis-prenyl chain elongation to produce the polyprenyl backbone of dolichol, a glycosyl carrier-lipid required for the biosynthesis of several classes of glycoprotein.</text>
</comment>
<comment type="cofactor">
    <cofactor evidence="1">
        <name>Mg(2+)</name>
        <dbReference type="ChEBI" id="CHEBI:18420"/>
    </cofactor>
</comment>
<comment type="pathway">
    <text>Protein modification; protein glycosylation.</text>
</comment>
<comment type="alternative products">
    <event type="alternative splicing"/>
    <isoform>
        <id>Q56Y11-1</id>
        <name>1</name>
        <sequence type="displayed"/>
    </isoform>
    <isoform>
        <id>Q56Y11-2</id>
        <name>2</name>
        <sequence type="described" ref="VSP_015652 VSP_015653"/>
    </isoform>
</comment>
<comment type="miscellaneous">
    <molecule>Isoform 2</molecule>
    <text evidence="3">May be due to an intron retention.</text>
</comment>
<comment type="similarity">
    <text evidence="3">Belongs to the UPP synthase family.</text>
</comment>
<name>DDPS2_ARATH</name>
<organism>
    <name type="scientific">Arabidopsis thaliana</name>
    <name type="common">Mouse-ear cress</name>
    <dbReference type="NCBI Taxonomy" id="3702"/>
    <lineage>
        <taxon>Eukaryota</taxon>
        <taxon>Viridiplantae</taxon>
        <taxon>Streptophyta</taxon>
        <taxon>Embryophyta</taxon>
        <taxon>Tracheophyta</taxon>
        <taxon>Spermatophyta</taxon>
        <taxon>Magnoliopsida</taxon>
        <taxon>eudicotyledons</taxon>
        <taxon>Gunneridae</taxon>
        <taxon>Pentapetalae</taxon>
        <taxon>rosids</taxon>
        <taxon>malvids</taxon>
        <taxon>Brassicales</taxon>
        <taxon>Brassicaceae</taxon>
        <taxon>Camelineae</taxon>
        <taxon>Arabidopsis</taxon>
    </lineage>
</organism>
<dbReference type="EC" id="2.5.1.-"/>
<dbReference type="EMBL" id="AB020755">
    <property type="protein sequence ID" value="BAA97345.1"/>
    <property type="molecule type" value="Genomic_DNA"/>
</dbReference>
<dbReference type="EMBL" id="CP002688">
    <property type="protein sequence ID" value="AED97096.1"/>
    <property type="molecule type" value="Genomic_DNA"/>
</dbReference>
<dbReference type="EMBL" id="AK221512">
    <property type="protein sequence ID" value="BAD94770.1"/>
    <property type="molecule type" value="mRNA"/>
</dbReference>
<dbReference type="RefSeq" id="NP_200685.1">
    <molecule id="Q56Y11-1"/>
    <property type="nucleotide sequence ID" value="NM_125264.3"/>
</dbReference>
<dbReference type="PDB" id="8KGA">
    <property type="method" value="X-ray"/>
    <property type="resolution" value="2.18 A"/>
    <property type="chains" value="A/B=147-171"/>
</dbReference>
<dbReference type="PDB" id="8KGB">
    <property type="method" value="X-ray"/>
    <property type="resolution" value="2.32 A"/>
    <property type="chains" value="A/B/C/D=147-171"/>
</dbReference>
<dbReference type="PDBsum" id="8KGA"/>
<dbReference type="PDBsum" id="8KGB"/>
<dbReference type="SMR" id="Q56Y11"/>
<dbReference type="BioGRID" id="21235">
    <property type="interactions" value="1"/>
</dbReference>
<dbReference type="FunCoup" id="Q56Y11">
    <property type="interactions" value="24"/>
</dbReference>
<dbReference type="STRING" id="3702.Q56Y11"/>
<dbReference type="PaxDb" id="3702-AT5G58770.1"/>
<dbReference type="ProteomicsDB" id="224663">
    <molecule id="Q56Y11-1"/>
</dbReference>
<dbReference type="EnsemblPlants" id="AT5G58770.1">
    <molecule id="Q56Y11-1"/>
    <property type="protein sequence ID" value="AT5G58770.1"/>
    <property type="gene ID" value="AT5G58770"/>
</dbReference>
<dbReference type="GeneID" id="835991"/>
<dbReference type="Gramene" id="AT5G58770.1">
    <molecule id="Q56Y11-1"/>
    <property type="protein sequence ID" value="AT5G58770.1"/>
    <property type="gene ID" value="AT5G58770"/>
</dbReference>
<dbReference type="KEGG" id="ath:AT5G58770"/>
<dbReference type="Araport" id="AT5G58770"/>
<dbReference type="TAIR" id="AT5G58770">
    <property type="gene designation" value="CPT4"/>
</dbReference>
<dbReference type="eggNOG" id="KOG1602">
    <property type="taxonomic scope" value="Eukaryota"/>
</dbReference>
<dbReference type="HOGENOM" id="CLU_038505_1_0_1"/>
<dbReference type="InParanoid" id="Q56Y11"/>
<dbReference type="OMA" id="FDRRDLW"/>
<dbReference type="OrthoDB" id="4173905at2759"/>
<dbReference type="PhylomeDB" id="Q56Y11"/>
<dbReference type="UniPathway" id="UPA00378"/>
<dbReference type="PRO" id="PR:Q56Y11"/>
<dbReference type="Proteomes" id="UP000006548">
    <property type="component" value="Chromosome 5"/>
</dbReference>
<dbReference type="ExpressionAtlas" id="Q56Y11">
    <property type="expression patterns" value="baseline and differential"/>
</dbReference>
<dbReference type="GO" id="GO:0009507">
    <property type="term" value="C:chloroplast"/>
    <property type="evidence" value="ECO:0007005"/>
    <property type="project" value="TAIR"/>
</dbReference>
<dbReference type="GO" id="GO:0009570">
    <property type="term" value="C:chloroplast stroma"/>
    <property type="evidence" value="ECO:0000314"/>
    <property type="project" value="TAIR"/>
</dbReference>
<dbReference type="GO" id="GO:0004659">
    <property type="term" value="F:prenyltransferase activity"/>
    <property type="evidence" value="ECO:0007669"/>
    <property type="project" value="UniProtKB-ARBA"/>
</dbReference>
<dbReference type="GO" id="GO:0009668">
    <property type="term" value="P:plastid membrane organization"/>
    <property type="evidence" value="ECO:0000315"/>
    <property type="project" value="TAIR"/>
</dbReference>
<dbReference type="GO" id="GO:0006486">
    <property type="term" value="P:protein glycosylation"/>
    <property type="evidence" value="ECO:0007669"/>
    <property type="project" value="UniProtKB-UniPathway"/>
</dbReference>
<dbReference type="CDD" id="cd00475">
    <property type="entry name" value="Cis_IPPS"/>
    <property type="match status" value="1"/>
</dbReference>
<dbReference type="FunFam" id="3.40.1180.10:FF:000001">
    <property type="entry name" value="(2E,6E)-farnesyl-diphosphate-specific ditrans,polycis-undecaprenyl-diphosphate synthase"/>
    <property type="match status" value="1"/>
</dbReference>
<dbReference type="Gene3D" id="3.40.1180.10">
    <property type="entry name" value="Decaprenyl diphosphate synthase-like"/>
    <property type="match status" value="1"/>
</dbReference>
<dbReference type="HAMAP" id="MF_01139">
    <property type="entry name" value="ISPT"/>
    <property type="match status" value="1"/>
</dbReference>
<dbReference type="InterPro" id="IPR001441">
    <property type="entry name" value="UPP_synth-like"/>
</dbReference>
<dbReference type="InterPro" id="IPR018520">
    <property type="entry name" value="UPP_synth-like_CS"/>
</dbReference>
<dbReference type="InterPro" id="IPR036424">
    <property type="entry name" value="UPP_synth-like_sf"/>
</dbReference>
<dbReference type="NCBIfam" id="TIGR00055">
    <property type="entry name" value="uppS"/>
    <property type="match status" value="1"/>
</dbReference>
<dbReference type="PANTHER" id="PTHR10291:SF0">
    <property type="entry name" value="DEHYDRODOLICHYL DIPHOSPHATE SYNTHASE 2"/>
    <property type="match status" value="1"/>
</dbReference>
<dbReference type="PANTHER" id="PTHR10291">
    <property type="entry name" value="DEHYDRODOLICHYL DIPHOSPHATE SYNTHASE FAMILY MEMBER"/>
    <property type="match status" value="1"/>
</dbReference>
<dbReference type="Pfam" id="PF01255">
    <property type="entry name" value="Prenyltransf"/>
    <property type="match status" value="1"/>
</dbReference>
<dbReference type="SUPFAM" id="SSF64005">
    <property type="entry name" value="Undecaprenyl diphosphate synthase"/>
    <property type="match status" value="1"/>
</dbReference>
<dbReference type="PROSITE" id="PS01066">
    <property type="entry name" value="UPP_SYNTHASE"/>
    <property type="match status" value="1"/>
</dbReference>
<protein>
    <recommendedName>
        <fullName>Dehydrodolichyl diphosphate synthase 2</fullName>
        <shortName>Dedol-PP synthase 2</shortName>
        <ecNumber>2.5.1.-</ecNumber>
    </recommendedName>
</protein>
<evidence type="ECO:0000250" key="1"/>
<evidence type="ECO:0000303" key="2">
    <source ref="3"/>
</evidence>
<evidence type="ECO:0000305" key="3"/>
<evidence type="ECO:0007829" key="4">
    <source>
        <dbReference type="PDB" id="8KGA"/>
    </source>
</evidence>
<feature type="chain" id="PRO_0000123752" description="Dehydrodolichyl diphosphate synthase 2">
    <location>
        <begin position="1"/>
        <end position="310"/>
    </location>
</feature>
<feature type="splice variant" id="VSP_015652" description="In isoform 2." evidence="2">
    <original>IEIDFL</original>
    <variation>VSDKPN</variation>
    <location>
        <begin position="140"/>
        <end position="145"/>
    </location>
</feature>
<feature type="splice variant" id="VSP_015653" description="In isoform 2." evidence="2">
    <location>
        <begin position="146"/>
        <end position="310"/>
    </location>
</feature>
<feature type="helix" evidence="4">
    <location>
        <begin position="147"/>
        <end position="162"/>
    </location>
</feature>
<feature type="strand" evidence="4">
    <location>
        <begin position="166"/>
        <end position="171"/>
    </location>
</feature>